<evidence type="ECO:0000255" key="1">
    <source>
        <dbReference type="HAMAP-Rule" id="MF_00017"/>
    </source>
</evidence>
<dbReference type="EMBL" id="CP000939">
    <property type="protein sequence ID" value="ACA45584.1"/>
    <property type="molecule type" value="Genomic_DNA"/>
</dbReference>
<dbReference type="RefSeq" id="WP_003359478.1">
    <property type="nucleotide sequence ID" value="NC_010516.1"/>
</dbReference>
<dbReference type="SMR" id="B1IDW8"/>
<dbReference type="GeneID" id="5187947"/>
<dbReference type="KEGG" id="cbb:CLD_0784"/>
<dbReference type="HOGENOM" id="CLU_060739_1_0_9"/>
<dbReference type="Proteomes" id="UP000008541">
    <property type="component" value="Chromosome"/>
</dbReference>
<dbReference type="GO" id="GO:0003677">
    <property type="term" value="F:DNA binding"/>
    <property type="evidence" value="ECO:0007669"/>
    <property type="project" value="UniProtKB-UniRule"/>
</dbReference>
<dbReference type="GO" id="GO:0008270">
    <property type="term" value="F:zinc ion binding"/>
    <property type="evidence" value="ECO:0007669"/>
    <property type="project" value="UniProtKB-KW"/>
</dbReference>
<dbReference type="GO" id="GO:0006310">
    <property type="term" value="P:DNA recombination"/>
    <property type="evidence" value="ECO:0007669"/>
    <property type="project" value="UniProtKB-UniRule"/>
</dbReference>
<dbReference type="GO" id="GO:0006281">
    <property type="term" value="P:DNA repair"/>
    <property type="evidence" value="ECO:0007669"/>
    <property type="project" value="UniProtKB-UniRule"/>
</dbReference>
<dbReference type="CDD" id="cd01025">
    <property type="entry name" value="TOPRIM_recR"/>
    <property type="match status" value="1"/>
</dbReference>
<dbReference type="Gene3D" id="3.30.60.80">
    <property type="match status" value="1"/>
</dbReference>
<dbReference type="Gene3D" id="3.40.1360.10">
    <property type="match status" value="1"/>
</dbReference>
<dbReference type="Gene3D" id="6.10.250.240">
    <property type="match status" value="1"/>
</dbReference>
<dbReference type="Gene3D" id="1.10.8.420">
    <property type="entry name" value="RecR Domain 1"/>
    <property type="match status" value="1"/>
</dbReference>
<dbReference type="HAMAP" id="MF_00017">
    <property type="entry name" value="RecR"/>
    <property type="match status" value="1"/>
</dbReference>
<dbReference type="InterPro" id="IPR000093">
    <property type="entry name" value="DNA_Rcmb_RecR"/>
</dbReference>
<dbReference type="InterPro" id="IPR023627">
    <property type="entry name" value="Rcmb_RecR"/>
</dbReference>
<dbReference type="InterPro" id="IPR015967">
    <property type="entry name" value="Rcmb_RecR_Znf"/>
</dbReference>
<dbReference type="InterPro" id="IPR006171">
    <property type="entry name" value="TOPRIM_dom"/>
</dbReference>
<dbReference type="InterPro" id="IPR034137">
    <property type="entry name" value="TOPRIM_RecR"/>
</dbReference>
<dbReference type="NCBIfam" id="TIGR00615">
    <property type="entry name" value="recR"/>
    <property type="match status" value="1"/>
</dbReference>
<dbReference type="PANTHER" id="PTHR30446">
    <property type="entry name" value="RECOMBINATION PROTEIN RECR"/>
    <property type="match status" value="1"/>
</dbReference>
<dbReference type="PANTHER" id="PTHR30446:SF0">
    <property type="entry name" value="RECOMBINATION PROTEIN RECR"/>
    <property type="match status" value="1"/>
</dbReference>
<dbReference type="Pfam" id="PF21175">
    <property type="entry name" value="RecR_C"/>
    <property type="match status" value="1"/>
</dbReference>
<dbReference type="Pfam" id="PF21176">
    <property type="entry name" value="RecR_HhH"/>
    <property type="match status" value="1"/>
</dbReference>
<dbReference type="Pfam" id="PF02132">
    <property type="entry name" value="RecR_ZnF"/>
    <property type="match status" value="1"/>
</dbReference>
<dbReference type="Pfam" id="PF13662">
    <property type="entry name" value="Toprim_4"/>
    <property type="match status" value="1"/>
</dbReference>
<dbReference type="SMART" id="SM00493">
    <property type="entry name" value="TOPRIM"/>
    <property type="match status" value="1"/>
</dbReference>
<dbReference type="SUPFAM" id="SSF111304">
    <property type="entry name" value="Recombination protein RecR"/>
    <property type="match status" value="1"/>
</dbReference>
<dbReference type="PROSITE" id="PS01300">
    <property type="entry name" value="RECR"/>
    <property type="match status" value="1"/>
</dbReference>
<dbReference type="PROSITE" id="PS50880">
    <property type="entry name" value="TOPRIM"/>
    <property type="match status" value="1"/>
</dbReference>
<reference key="1">
    <citation type="journal article" date="2007" name="PLoS ONE">
        <title>Analysis of the neurotoxin complex genes in Clostridium botulinum A1-A4 and B1 strains: BoNT/A3, /Ba4 and /B1 clusters are located within plasmids.</title>
        <authorList>
            <person name="Smith T.J."/>
            <person name="Hill K.K."/>
            <person name="Foley B.T."/>
            <person name="Detter J.C."/>
            <person name="Munk A.C."/>
            <person name="Bruce D.C."/>
            <person name="Doggett N.A."/>
            <person name="Smith L.A."/>
            <person name="Marks J.D."/>
            <person name="Xie G."/>
            <person name="Brettin T.S."/>
        </authorList>
    </citation>
    <scope>NUCLEOTIDE SEQUENCE [LARGE SCALE GENOMIC DNA]</scope>
    <source>
        <strain>Okra / Type B1</strain>
    </source>
</reference>
<protein>
    <recommendedName>
        <fullName evidence="1">Recombination protein RecR</fullName>
    </recommendedName>
</protein>
<organism>
    <name type="scientific">Clostridium botulinum (strain Okra / Type B1)</name>
    <dbReference type="NCBI Taxonomy" id="498213"/>
    <lineage>
        <taxon>Bacteria</taxon>
        <taxon>Bacillati</taxon>
        <taxon>Bacillota</taxon>
        <taxon>Clostridia</taxon>
        <taxon>Eubacteriales</taxon>
        <taxon>Clostridiaceae</taxon>
        <taxon>Clostridium</taxon>
    </lineage>
</organism>
<keyword id="KW-0227">DNA damage</keyword>
<keyword id="KW-0233">DNA recombination</keyword>
<keyword id="KW-0234">DNA repair</keyword>
<keyword id="KW-0479">Metal-binding</keyword>
<keyword id="KW-0862">Zinc</keyword>
<keyword id="KW-0863">Zinc-finger</keyword>
<comment type="function">
    <text evidence="1">May play a role in DNA repair. It seems to be involved in an RecBC-independent recombinational process of DNA repair. It may act with RecF and RecO.</text>
</comment>
<comment type="similarity">
    <text evidence="1">Belongs to the RecR family.</text>
</comment>
<sequence length="198" mass="21936">MDFYPIAIEKLIEEFAKLPGIGYKTAQRLTLYVLNLPKEEVKEFSEALVKARGTIKYCSVCGNFTDKDPCAICSNPNRNKSIICVIEQPKDIMSMEKIREYNGVYHVLHGNISPMAGRGPEDIKLKELIRRIDGSVNEVIVATNPNVEGEATAMYISKILKPLGVKVTRIAHGVPVGGDLEYADEVTLAKALEGRIEL</sequence>
<feature type="chain" id="PRO_1000089722" description="Recombination protein RecR">
    <location>
        <begin position="1"/>
        <end position="198"/>
    </location>
</feature>
<feature type="domain" description="Toprim" evidence="1">
    <location>
        <begin position="81"/>
        <end position="175"/>
    </location>
</feature>
<feature type="zinc finger region" description="C4-type" evidence="1">
    <location>
        <begin position="58"/>
        <end position="73"/>
    </location>
</feature>
<gene>
    <name evidence="1" type="primary">recR</name>
    <name type="ordered locus">CLD_0784</name>
</gene>
<name>RECR_CLOBK</name>
<proteinExistence type="inferred from homology"/>
<accession>B1IDW8</accession>